<dbReference type="EMBL" id="X62819">
    <property type="protein sequence ID" value="CAA44631.1"/>
    <property type="molecule type" value="mRNA"/>
</dbReference>
<dbReference type="PIR" id="S16521">
    <property type="entry name" value="S16521"/>
</dbReference>
<dbReference type="SMR" id="P25010"/>
<dbReference type="GO" id="GO:0051301">
    <property type="term" value="P:cell division"/>
    <property type="evidence" value="ECO:0007669"/>
    <property type="project" value="UniProtKB-KW"/>
</dbReference>
<dbReference type="CDD" id="cd20506">
    <property type="entry name" value="CYCLIN_AtCycA-like_rpt2"/>
    <property type="match status" value="1"/>
</dbReference>
<dbReference type="FunFam" id="1.10.472.10:FF:000013">
    <property type="entry name" value="Cyclin A1"/>
    <property type="match status" value="1"/>
</dbReference>
<dbReference type="Gene3D" id="1.10.472.10">
    <property type="entry name" value="Cyclin-like"/>
    <property type="match status" value="2"/>
</dbReference>
<dbReference type="InterPro" id="IPR039361">
    <property type="entry name" value="Cyclin"/>
</dbReference>
<dbReference type="InterPro" id="IPR013763">
    <property type="entry name" value="Cyclin-like_dom"/>
</dbReference>
<dbReference type="InterPro" id="IPR036915">
    <property type="entry name" value="Cyclin-like_sf"/>
</dbReference>
<dbReference type="InterPro" id="IPR004367">
    <property type="entry name" value="Cyclin_C-dom"/>
</dbReference>
<dbReference type="InterPro" id="IPR006671">
    <property type="entry name" value="Cyclin_N"/>
</dbReference>
<dbReference type="InterPro" id="IPR048258">
    <property type="entry name" value="Cyclins_cyclin-box"/>
</dbReference>
<dbReference type="PANTHER" id="PTHR10177">
    <property type="entry name" value="CYCLINS"/>
    <property type="match status" value="1"/>
</dbReference>
<dbReference type="Pfam" id="PF02984">
    <property type="entry name" value="Cyclin_C"/>
    <property type="match status" value="1"/>
</dbReference>
<dbReference type="Pfam" id="PF00134">
    <property type="entry name" value="Cyclin_N"/>
    <property type="match status" value="1"/>
</dbReference>
<dbReference type="SMART" id="SM00385">
    <property type="entry name" value="CYCLIN"/>
    <property type="match status" value="2"/>
</dbReference>
<dbReference type="SMART" id="SM01332">
    <property type="entry name" value="Cyclin_C"/>
    <property type="match status" value="1"/>
</dbReference>
<dbReference type="SUPFAM" id="SSF47954">
    <property type="entry name" value="Cyclin-like"/>
    <property type="match status" value="2"/>
</dbReference>
<dbReference type="PROSITE" id="PS00292">
    <property type="entry name" value="CYCLINS"/>
    <property type="match status" value="1"/>
</dbReference>
<feature type="chain" id="PRO_0000080348" description="G2/mitotic-specific cyclin C13-1">
    <location>
        <begin position="1" status="less than"/>
        <end position="341"/>
    </location>
</feature>
<feature type="non-terminal residue">
    <location>
        <position position="1"/>
    </location>
</feature>
<protein>
    <recommendedName>
        <fullName>G2/mitotic-specific cyclin C13-1</fullName>
    </recommendedName>
    <alternativeName>
        <fullName>A-like cyclin</fullName>
    </alternativeName>
</protein>
<name>CCNAL_DAUCA</name>
<sequence length="341" mass="38724">APSMTTPEPASKRRVVLGEISNNSSAVSGNEDLLCREFEVPKCVAQKKRKRGVKEDVGVDFGEKFDDPQMCSAYVSDVYEYLKQMEMETKRRPMMNYIEQVQKDVTSNMRGVLVDWLVEVSLEYKLLPETLYLAISYVDRYLSVNVLNRQKLQLLGVSSFLIASKYEEIKPKNVADFVDITDNTYSQQEVVKMEADLLKTLKFEMGSPTVKTFLGFIRAVQENPDVPKLKFEFLANYLAELSLLDYGCLEFVPSLIAASVTFLARFTIRPNVNPWSIALQKCSGYKSKDLKECVLLLHDLQMGRRGGSLSAVRDKYKKHKFKCVSTLSPAPEIPESIFNDV</sequence>
<keyword id="KW-0131">Cell cycle</keyword>
<keyword id="KW-0132">Cell division</keyword>
<keyword id="KW-0195">Cyclin</keyword>
<keyword id="KW-0498">Mitosis</keyword>
<evidence type="ECO:0000305" key="1"/>
<accession>P25010</accession>
<reference key="1">
    <citation type="journal article" date="1991" name="EMBO J.">
        <title>Isolation and characterization of cDNA clones for plant cyclins.</title>
        <authorList>
            <person name="Hata S."/>
            <person name="Kouchi H."/>
            <person name="Suzuka I."/>
            <person name="Ishii T."/>
        </authorList>
    </citation>
    <scope>NUCLEOTIDE SEQUENCE [MRNA]</scope>
    <source>
        <strain>cv. Kurodagosun</strain>
    </source>
</reference>
<organism>
    <name type="scientific">Daucus carota</name>
    <name type="common">Wild carrot</name>
    <dbReference type="NCBI Taxonomy" id="4039"/>
    <lineage>
        <taxon>Eukaryota</taxon>
        <taxon>Viridiplantae</taxon>
        <taxon>Streptophyta</taxon>
        <taxon>Embryophyta</taxon>
        <taxon>Tracheophyta</taxon>
        <taxon>Spermatophyta</taxon>
        <taxon>Magnoliopsida</taxon>
        <taxon>eudicotyledons</taxon>
        <taxon>Gunneridae</taxon>
        <taxon>Pentapetalae</taxon>
        <taxon>asterids</taxon>
        <taxon>campanulids</taxon>
        <taxon>Apiales</taxon>
        <taxon>Apiaceae</taxon>
        <taxon>Apioideae</taxon>
        <taxon>Scandiceae</taxon>
        <taxon>Daucinae</taxon>
        <taxon>Daucus</taxon>
        <taxon>Daucus sect. Daucus</taxon>
    </lineage>
</organism>
<proteinExistence type="evidence at transcript level"/>
<comment type="function">
    <text>Essential for the control of the cell cycle at the G2/M (mitosis) transition. Interacts with the CDC2 and CDK2 protein kinases to form MPF. G2/M cyclins accumulate steadily during G2 and are abruptly destroyed at mitosis.</text>
</comment>
<comment type="similarity">
    <text evidence="1">Belongs to the cyclin family. Cyclin AB subfamily.</text>
</comment>